<evidence type="ECO:0000255" key="1">
    <source>
        <dbReference type="HAMAP-Rule" id="MF_00080"/>
    </source>
</evidence>
<protein>
    <recommendedName>
        <fullName evidence="1">Translation initiation factor IF-3</fullName>
    </recommendedName>
</protein>
<gene>
    <name evidence="1" type="primary">infC</name>
    <name type="ordered locus">SAK_1417</name>
</gene>
<reference key="1">
    <citation type="journal article" date="2005" name="Proc. Natl. Acad. Sci. U.S.A.">
        <title>Genome analysis of multiple pathogenic isolates of Streptococcus agalactiae: implications for the microbial 'pan-genome'.</title>
        <authorList>
            <person name="Tettelin H."/>
            <person name="Masignani V."/>
            <person name="Cieslewicz M.J."/>
            <person name="Donati C."/>
            <person name="Medini D."/>
            <person name="Ward N.L."/>
            <person name="Angiuoli S.V."/>
            <person name="Crabtree J."/>
            <person name="Jones A.L."/>
            <person name="Durkin A.S."/>
            <person name="DeBoy R.T."/>
            <person name="Davidsen T.M."/>
            <person name="Mora M."/>
            <person name="Scarselli M."/>
            <person name="Margarit y Ros I."/>
            <person name="Peterson J.D."/>
            <person name="Hauser C.R."/>
            <person name="Sundaram J.P."/>
            <person name="Nelson W.C."/>
            <person name="Madupu R."/>
            <person name="Brinkac L.M."/>
            <person name="Dodson R.J."/>
            <person name="Rosovitz M.J."/>
            <person name="Sullivan S.A."/>
            <person name="Daugherty S.C."/>
            <person name="Haft D.H."/>
            <person name="Selengut J."/>
            <person name="Gwinn M.L."/>
            <person name="Zhou L."/>
            <person name="Zafar N."/>
            <person name="Khouri H."/>
            <person name="Radune D."/>
            <person name="Dimitrov G."/>
            <person name="Watkins K."/>
            <person name="O'Connor K.J."/>
            <person name="Smith S."/>
            <person name="Utterback T.R."/>
            <person name="White O."/>
            <person name="Rubens C.E."/>
            <person name="Grandi G."/>
            <person name="Madoff L.C."/>
            <person name="Kasper D.L."/>
            <person name="Telford J.L."/>
            <person name="Wessels M.R."/>
            <person name="Rappuoli R."/>
            <person name="Fraser C.M."/>
        </authorList>
    </citation>
    <scope>NUCLEOTIDE SEQUENCE [LARGE SCALE GENOMIC DNA]</scope>
    <source>
        <strain>ATCC 27591 / A909 / CDC SS700</strain>
    </source>
</reference>
<proteinExistence type="inferred from homology"/>
<accession>Q3K0C8</accession>
<dbReference type="EMBL" id="CP000114">
    <property type="protein sequence ID" value="ABA46347.1"/>
    <property type="molecule type" value="Genomic_DNA"/>
</dbReference>
<dbReference type="RefSeq" id="WP_000691023.1">
    <property type="nucleotide sequence ID" value="NC_007432.1"/>
</dbReference>
<dbReference type="SMR" id="Q3K0C8"/>
<dbReference type="GeneID" id="66886260"/>
<dbReference type="KEGG" id="sak:SAK_1417"/>
<dbReference type="HOGENOM" id="CLU_054919_3_2_9"/>
<dbReference type="GO" id="GO:0005829">
    <property type="term" value="C:cytosol"/>
    <property type="evidence" value="ECO:0007669"/>
    <property type="project" value="TreeGrafter"/>
</dbReference>
<dbReference type="GO" id="GO:0016020">
    <property type="term" value="C:membrane"/>
    <property type="evidence" value="ECO:0007669"/>
    <property type="project" value="TreeGrafter"/>
</dbReference>
<dbReference type="GO" id="GO:0043022">
    <property type="term" value="F:ribosome binding"/>
    <property type="evidence" value="ECO:0007669"/>
    <property type="project" value="TreeGrafter"/>
</dbReference>
<dbReference type="GO" id="GO:0003743">
    <property type="term" value="F:translation initiation factor activity"/>
    <property type="evidence" value="ECO:0007669"/>
    <property type="project" value="UniProtKB-UniRule"/>
</dbReference>
<dbReference type="GO" id="GO:0032790">
    <property type="term" value="P:ribosome disassembly"/>
    <property type="evidence" value="ECO:0007669"/>
    <property type="project" value="TreeGrafter"/>
</dbReference>
<dbReference type="FunFam" id="3.10.20.80:FF:000001">
    <property type="entry name" value="Translation initiation factor IF-3"/>
    <property type="match status" value="1"/>
</dbReference>
<dbReference type="FunFam" id="3.30.110.10:FF:000001">
    <property type="entry name" value="Translation initiation factor IF-3"/>
    <property type="match status" value="1"/>
</dbReference>
<dbReference type="Gene3D" id="3.30.110.10">
    <property type="entry name" value="Translation initiation factor 3 (IF-3), C-terminal domain"/>
    <property type="match status" value="1"/>
</dbReference>
<dbReference type="Gene3D" id="3.10.20.80">
    <property type="entry name" value="Translation initiation factor 3 (IF-3), N-terminal domain"/>
    <property type="match status" value="1"/>
</dbReference>
<dbReference type="HAMAP" id="MF_00080">
    <property type="entry name" value="IF_3"/>
    <property type="match status" value="1"/>
</dbReference>
<dbReference type="InterPro" id="IPR036788">
    <property type="entry name" value="T_IF-3_C_sf"/>
</dbReference>
<dbReference type="InterPro" id="IPR036787">
    <property type="entry name" value="T_IF-3_N_sf"/>
</dbReference>
<dbReference type="InterPro" id="IPR019813">
    <property type="entry name" value="Translation_initiation_fac3_CS"/>
</dbReference>
<dbReference type="InterPro" id="IPR001288">
    <property type="entry name" value="Translation_initiation_fac_3"/>
</dbReference>
<dbReference type="InterPro" id="IPR019815">
    <property type="entry name" value="Translation_initiation_fac_3_C"/>
</dbReference>
<dbReference type="InterPro" id="IPR019814">
    <property type="entry name" value="Translation_initiation_fac_3_N"/>
</dbReference>
<dbReference type="NCBIfam" id="TIGR00168">
    <property type="entry name" value="infC"/>
    <property type="match status" value="1"/>
</dbReference>
<dbReference type="PANTHER" id="PTHR10938">
    <property type="entry name" value="TRANSLATION INITIATION FACTOR IF-3"/>
    <property type="match status" value="1"/>
</dbReference>
<dbReference type="PANTHER" id="PTHR10938:SF0">
    <property type="entry name" value="TRANSLATION INITIATION FACTOR IF-3, MITOCHONDRIAL"/>
    <property type="match status" value="1"/>
</dbReference>
<dbReference type="Pfam" id="PF00707">
    <property type="entry name" value="IF3_C"/>
    <property type="match status" value="1"/>
</dbReference>
<dbReference type="Pfam" id="PF05198">
    <property type="entry name" value="IF3_N"/>
    <property type="match status" value="1"/>
</dbReference>
<dbReference type="SUPFAM" id="SSF55200">
    <property type="entry name" value="Translation initiation factor IF3, C-terminal domain"/>
    <property type="match status" value="1"/>
</dbReference>
<dbReference type="SUPFAM" id="SSF54364">
    <property type="entry name" value="Translation initiation factor IF3, N-terminal domain"/>
    <property type="match status" value="1"/>
</dbReference>
<dbReference type="PROSITE" id="PS00938">
    <property type="entry name" value="IF3"/>
    <property type="match status" value="1"/>
</dbReference>
<sequence length="176" mass="20092">MKIIAKKDLFINDEIRVREVRLVGLEGEQLGIKPLSEAQAIADDANVDLVLIQPQATPPVAKIMDYGKFKFEYQKKQKEQRKKQSVVTVKEVRLSPVIDKGDFETKLRNGRKFLEKGNKVKVSIRFKGRMITHKEIGAKVLAEFAEATQDIAIIEQRAKMDGRQMFMQLAPIPDKK</sequence>
<comment type="function">
    <text evidence="1">IF-3 binds to the 30S ribosomal subunit and shifts the equilibrium between 70S ribosomes and their 50S and 30S subunits in favor of the free subunits, thus enhancing the availability of 30S subunits on which protein synthesis initiation begins.</text>
</comment>
<comment type="subunit">
    <text evidence="1">Monomer.</text>
</comment>
<comment type="subcellular location">
    <subcellularLocation>
        <location evidence="1">Cytoplasm</location>
    </subcellularLocation>
</comment>
<comment type="similarity">
    <text evidence="1">Belongs to the IF-3 family.</text>
</comment>
<keyword id="KW-0963">Cytoplasm</keyword>
<keyword id="KW-0396">Initiation factor</keyword>
<keyword id="KW-0648">Protein biosynthesis</keyword>
<feature type="chain" id="PRO_1000004570" description="Translation initiation factor IF-3">
    <location>
        <begin position="1"/>
        <end position="176"/>
    </location>
</feature>
<name>IF3_STRA1</name>
<organism>
    <name type="scientific">Streptococcus agalactiae serotype Ia (strain ATCC 27591 / A909 / CDC SS700)</name>
    <dbReference type="NCBI Taxonomy" id="205921"/>
    <lineage>
        <taxon>Bacteria</taxon>
        <taxon>Bacillati</taxon>
        <taxon>Bacillota</taxon>
        <taxon>Bacilli</taxon>
        <taxon>Lactobacillales</taxon>
        <taxon>Streptococcaceae</taxon>
        <taxon>Streptococcus</taxon>
    </lineage>
</organism>